<sequence>MSVLTNPSLLLLRNSEKLVGKSILVVNFVQDGFLAELKKRNPESKITAFSYNHANGEFAKNTPGVDVCVNHCISGNDFDLVILYYPKSKPEVLMALDNIRAVITADAELLVVGENKSGVKSIEKQLTDKANFSNKIDSAKHCVLYSFAELKQLSQFNISDYHKPFTVSVADSEFTAISIPGVFNHGNLDVGTKILLENAPLIKQGTVLDFGCGAGLIATYLGLQNPALSFVCSDVSALAIYATTQTLKLNNIKGEALLSDGLTNITGKFDLIISNPPFHTGIATDYTVAETFLANAKQHLTKAGKLNIVANSFLKYPPILEAQFDNYQTVFKNNKFAVYSS</sequence>
<feature type="chain" id="PRO_0000369733" description="Ribosomal RNA small subunit methyltransferase C">
    <location>
        <begin position="1"/>
        <end position="341"/>
    </location>
</feature>
<proteinExistence type="inferred from homology"/>
<keyword id="KW-0963">Cytoplasm</keyword>
<keyword id="KW-0489">Methyltransferase</keyword>
<keyword id="KW-1185">Reference proteome</keyword>
<keyword id="KW-0698">rRNA processing</keyword>
<keyword id="KW-0949">S-adenosyl-L-methionine</keyword>
<keyword id="KW-0808">Transferase</keyword>
<evidence type="ECO:0000255" key="1">
    <source>
        <dbReference type="HAMAP-Rule" id="MF_01862"/>
    </source>
</evidence>
<gene>
    <name evidence="1" type="primary">rsmC</name>
    <name type="ordered locus">PSHAa0552</name>
</gene>
<dbReference type="EC" id="2.1.1.172" evidence="1"/>
<dbReference type="EMBL" id="CR954246">
    <property type="protein sequence ID" value="CAI85640.1"/>
    <property type="molecule type" value="Genomic_DNA"/>
</dbReference>
<dbReference type="SMR" id="Q3ILJ2"/>
<dbReference type="STRING" id="326442.PSHAa0552"/>
<dbReference type="KEGG" id="pha:PSHAa0552"/>
<dbReference type="PATRIC" id="fig|326442.8.peg.521"/>
<dbReference type="eggNOG" id="COG2813">
    <property type="taxonomic scope" value="Bacteria"/>
</dbReference>
<dbReference type="HOGENOM" id="CLU_049581_0_1_6"/>
<dbReference type="BioCyc" id="PHAL326442:PSHA_RS02690-MONOMER"/>
<dbReference type="Proteomes" id="UP000006843">
    <property type="component" value="Chromosome I"/>
</dbReference>
<dbReference type="GO" id="GO:0005737">
    <property type="term" value="C:cytoplasm"/>
    <property type="evidence" value="ECO:0007669"/>
    <property type="project" value="UniProtKB-SubCell"/>
</dbReference>
<dbReference type="GO" id="GO:0052914">
    <property type="term" value="F:16S rRNA (guanine(1207)-N(2))-methyltransferase activity"/>
    <property type="evidence" value="ECO:0007669"/>
    <property type="project" value="UniProtKB-EC"/>
</dbReference>
<dbReference type="GO" id="GO:0003676">
    <property type="term" value="F:nucleic acid binding"/>
    <property type="evidence" value="ECO:0007669"/>
    <property type="project" value="InterPro"/>
</dbReference>
<dbReference type="CDD" id="cd02440">
    <property type="entry name" value="AdoMet_MTases"/>
    <property type="match status" value="1"/>
</dbReference>
<dbReference type="Gene3D" id="3.40.50.150">
    <property type="entry name" value="Vaccinia Virus protein VP39"/>
    <property type="match status" value="2"/>
</dbReference>
<dbReference type="HAMAP" id="MF_01862">
    <property type="entry name" value="16SrRNA_methyltr_C"/>
    <property type="match status" value="1"/>
</dbReference>
<dbReference type="InterPro" id="IPR002052">
    <property type="entry name" value="DNA_methylase_N6_adenine_CS"/>
</dbReference>
<dbReference type="InterPro" id="IPR013675">
    <property type="entry name" value="Mtase_sm_N"/>
</dbReference>
<dbReference type="InterPro" id="IPR023543">
    <property type="entry name" value="rRNA_ssu_MeTfrase_C"/>
</dbReference>
<dbReference type="InterPro" id="IPR046977">
    <property type="entry name" value="RsmC/RlmG"/>
</dbReference>
<dbReference type="InterPro" id="IPR029063">
    <property type="entry name" value="SAM-dependent_MTases_sf"/>
</dbReference>
<dbReference type="InterPro" id="IPR007848">
    <property type="entry name" value="Small_mtfrase_dom"/>
</dbReference>
<dbReference type="PANTHER" id="PTHR47816">
    <property type="entry name" value="RIBOSOMAL RNA SMALL SUBUNIT METHYLTRANSFERASE C"/>
    <property type="match status" value="1"/>
</dbReference>
<dbReference type="PANTHER" id="PTHR47816:SF4">
    <property type="entry name" value="RIBOSOMAL RNA SMALL SUBUNIT METHYLTRANSFERASE C"/>
    <property type="match status" value="1"/>
</dbReference>
<dbReference type="Pfam" id="PF05175">
    <property type="entry name" value="MTS"/>
    <property type="match status" value="1"/>
</dbReference>
<dbReference type="Pfam" id="PF08468">
    <property type="entry name" value="MTS_N"/>
    <property type="match status" value="1"/>
</dbReference>
<dbReference type="SUPFAM" id="SSF53335">
    <property type="entry name" value="S-adenosyl-L-methionine-dependent methyltransferases"/>
    <property type="match status" value="1"/>
</dbReference>
<name>RSMC_PSET1</name>
<protein>
    <recommendedName>
        <fullName evidence="1">Ribosomal RNA small subunit methyltransferase C</fullName>
        <ecNumber evidence="1">2.1.1.172</ecNumber>
    </recommendedName>
    <alternativeName>
        <fullName evidence="1">16S rRNA m2G1207 methyltransferase</fullName>
    </alternativeName>
    <alternativeName>
        <fullName evidence="1">rRNA (guanine-N(2)-)-methyltransferase RsmC</fullName>
    </alternativeName>
</protein>
<organism>
    <name type="scientific">Pseudoalteromonas translucida (strain TAC 125)</name>
    <dbReference type="NCBI Taxonomy" id="326442"/>
    <lineage>
        <taxon>Bacteria</taxon>
        <taxon>Pseudomonadati</taxon>
        <taxon>Pseudomonadota</taxon>
        <taxon>Gammaproteobacteria</taxon>
        <taxon>Alteromonadales</taxon>
        <taxon>Pseudoalteromonadaceae</taxon>
        <taxon>Pseudoalteromonas</taxon>
    </lineage>
</organism>
<comment type="function">
    <text evidence="1">Specifically methylates the guanine in position 1207 of 16S rRNA in the 30S particle.</text>
</comment>
<comment type="catalytic activity">
    <reaction evidence="1">
        <text>guanosine(1207) in 16S rRNA + S-adenosyl-L-methionine = N(2)-methylguanosine(1207) in 16S rRNA + S-adenosyl-L-homocysteine + H(+)</text>
        <dbReference type="Rhea" id="RHEA:42736"/>
        <dbReference type="Rhea" id="RHEA-COMP:10213"/>
        <dbReference type="Rhea" id="RHEA-COMP:10214"/>
        <dbReference type="ChEBI" id="CHEBI:15378"/>
        <dbReference type="ChEBI" id="CHEBI:57856"/>
        <dbReference type="ChEBI" id="CHEBI:59789"/>
        <dbReference type="ChEBI" id="CHEBI:74269"/>
        <dbReference type="ChEBI" id="CHEBI:74481"/>
        <dbReference type="EC" id="2.1.1.172"/>
    </reaction>
</comment>
<comment type="subunit">
    <text evidence="1">Monomer.</text>
</comment>
<comment type="subcellular location">
    <subcellularLocation>
        <location evidence="1">Cytoplasm</location>
    </subcellularLocation>
</comment>
<comment type="similarity">
    <text evidence="1">Belongs to the methyltransferase superfamily. RsmC family.</text>
</comment>
<accession>Q3ILJ2</accession>
<reference key="1">
    <citation type="journal article" date="2005" name="Genome Res.">
        <title>Coping with cold: the genome of the versatile marine Antarctica bacterium Pseudoalteromonas haloplanktis TAC125.</title>
        <authorList>
            <person name="Medigue C."/>
            <person name="Krin E."/>
            <person name="Pascal G."/>
            <person name="Barbe V."/>
            <person name="Bernsel A."/>
            <person name="Bertin P.N."/>
            <person name="Cheung F."/>
            <person name="Cruveiller S."/>
            <person name="D'Amico S."/>
            <person name="Duilio A."/>
            <person name="Fang G."/>
            <person name="Feller G."/>
            <person name="Ho C."/>
            <person name="Mangenot S."/>
            <person name="Marino G."/>
            <person name="Nilsson J."/>
            <person name="Parrilli E."/>
            <person name="Rocha E.P.C."/>
            <person name="Rouy Z."/>
            <person name="Sekowska A."/>
            <person name="Tutino M.L."/>
            <person name="Vallenet D."/>
            <person name="von Heijne G."/>
            <person name="Danchin A."/>
        </authorList>
    </citation>
    <scope>NUCLEOTIDE SEQUENCE [LARGE SCALE GENOMIC DNA]</scope>
    <source>
        <strain>TAC 125</strain>
    </source>
</reference>